<keyword id="KW-0963">Cytoplasm</keyword>
<keyword id="KW-0238">DNA-binding</keyword>
<keyword id="KW-0597">Phosphoprotein</keyword>
<keyword id="KW-1185">Reference proteome</keyword>
<keyword id="KW-0804">Transcription</keyword>
<keyword id="KW-0805">Transcription regulation</keyword>
<keyword id="KW-0902">Two-component regulatory system</keyword>
<reference key="1">
    <citation type="journal article" date="2005" name="J. Bacteriol.">
        <title>Insights on evolution of virulence and resistance from the complete genome analysis of an early methicillin-resistant Staphylococcus aureus strain and a biofilm-producing methicillin-resistant Staphylococcus epidermidis strain.</title>
        <authorList>
            <person name="Gill S.R."/>
            <person name="Fouts D.E."/>
            <person name="Archer G.L."/>
            <person name="Mongodin E.F."/>
            <person name="DeBoy R.T."/>
            <person name="Ravel J."/>
            <person name="Paulsen I.T."/>
            <person name="Kolonay J.F."/>
            <person name="Brinkac L.M."/>
            <person name="Beanan M.J."/>
            <person name="Dodson R.J."/>
            <person name="Daugherty S.C."/>
            <person name="Madupu R."/>
            <person name="Angiuoli S.V."/>
            <person name="Durkin A.S."/>
            <person name="Haft D.H."/>
            <person name="Vamathevan J.J."/>
            <person name="Khouri H."/>
            <person name="Utterback T.R."/>
            <person name="Lee C."/>
            <person name="Dimitrov G."/>
            <person name="Jiang L."/>
            <person name="Qin H."/>
            <person name="Weidman J."/>
            <person name="Tran K."/>
            <person name="Kang K.H."/>
            <person name="Hance I.R."/>
            <person name="Nelson K.E."/>
            <person name="Fraser C.M."/>
        </authorList>
    </citation>
    <scope>NUCLEOTIDE SEQUENCE [LARGE SCALE GENOMIC DNA]</scope>
    <source>
        <strain>ATCC 35984 / DSM 28319 / BCRC 17069 / CCUG 31568 / BM 3577 / RP62A</strain>
    </source>
</reference>
<accession>Q5HKE0</accession>
<name>Y2406_STAEQ</name>
<comment type="function">
    <text evidence="1">Probable member of the two-component regulatory system SERP2405/SERP2406.</text>
</comment>
<comment type="subcellular location">
    <subcellularLocation>
        <location evidence="4">Cytoplasm</location>
    </subcellularLocation>
</comment>
<comment type="PTM">
    <text evidence="4">Phosphorylated by SERP2405.</text>
</comment>
<gene>
    <name type="ordered locus">SERP2406</name>
</gene>
<sequence>MFKVIICDDERIIREGLKQMVPWEDYHFTTVYTAKDGVEALSLIRQHQPELVITDIRMPRKNGVDLLDDIKDLDCQIIILSSYDDFEYMKAGIQHHVLDYLLKPVDHTQLEHILDILVQRLLERPHSTNDDAAYHTAFQPLLKIDYDDYYVNQILSQIKQHYHKKVTVLDLINPIDVSESYAMRTFKEHVGITIVDYLNRYRILKSLHLLDQHYKHYEIAEKVGFSEYKMFCYHFKKYLHMSPSDYNKQSK</sequence>
<feature type="chain" id="PRO_0000299118" description="Uncharacterized response regulatory protein SERP2406">
    <location>
        <begin position="1"/>
        <end position="251"/>
    </location>
</feature>
<feature type="domain" description="Response regulatory" evidence="2">
    <location>
        <begin position="3"/>
        <end position="118"/>
    </location>
</feature>
<feature type="domain" description="HTH araC/xylS-type" evidence="3">
    <location>
        <begin position="152"/>
        <end position="249"/>
    </location>
</feature>
<feature type="DNA-binding region" description="H-T-H motif" evidence="3">
    <location>
        <begin position="169"/>
        <end position="190"/>
    </location>
</feature>
<feature type="DNA-binding region" description="H-T-H motif" evidence="3">
    <location>
        <begin position="216"/>
        <end position="239"/>
    </location>
</feature>
<feature type="modified residue" description="4-aspartylphosphate" evidence="2">
    <location>
        <position position="55"/>
    </location>
</feature>
<protein>
    <recommendedName>
        <fullName>Uncharacterized response regulatory protein SERP2406</fullName>
    </recommendedName>
</protein>
<evidence type="ECO:0000250" key="1"/>
<evidence type="ECO:0000255" key="2">
    <source>
        <dbReference type="PROSITE-ProRule" id="PRU00169"/>
    </source>
</evidence>
<evidence type="ECO:0000255" key="3">
    <source>
        <dbReference type="PROSITE-ProRule" id="PRU00593"/>
    </source>
</evidence>
<evidence type="ECO:0000305" key="4"/>
<proteinExistence type="inferred from homology"/>
<organism>
    <name type="scientific">Staphylococcus epidermidis (strain ATCC 35984 / DSM 28319 / BCRC 17069 / CCUG 31568 / BM 3577 / RP62A)</name>
    <dbReference type="NCBI Taxonomy" id="176279"/>
    <lineage>
        <taxon>Bacteria</taxon>
        <taxon>Bacillati</taxon>
        <taxon>Bacillota</taxon>
        <taxon>Bacilli</taxon>
        <taxon>Bacillales</taxon>
        <taxon>Staphylococcaceae</taxon>
        <taxon>Staphylococcus</taxon>
    </lineage>
</organism>
<dbReference type="EMBL" id="CP000029">
    <property type="protein sequence ID" value="AAW53253.1"/>
    <property type="molecule type" value="Genomic_DNA"/>
</dbReference>
<dbReference type="RefSeq" id="WP_002502644.1">
    <property type="nucleotide sequence ID" value="NC_002976.3"/>
</dbReference>
<dbReference type="SMR" id="Q5HKE0"/>
<dbReference type="STRING" id="176279.SERP2406"/>
<dbReference type="KEGG" id="ser:SERP2406"/>
<dbReference type="eggNOG" id="COG2207">
    <property type="taxonomic scope" value="Bacteria"/>
</dbReference>
<dbReference type="eggNOG" id="COG4753">
    <property type="taxonomic scope" value="Bacteria"/>
</dbReference>
<dbReference type="HOGENOM" id="CLU_000445_5_1_9"/>
<dbReference type="Proteomes" id="UP000000531">
    <property type="component" value="Chromosome"/>
</dbReference>
<dbReference type="GO" id="GO:0005737">
    <property type="term" value="C:cytoplasm"/>
    <property type="evidence" value="ECO:0007669"/>
    <property type="project" value="UniProtKB-SubCell"/>
</dbReference>
<dbReference type="GO" id="GO:0003700">
    <property type="term" value="F:DNA-binding transcription factor activity"/>
    <property type="evidence" value="ECO:0007669"/>
    <property type="project" value="InterPro"/>
</dbReference>
<dbReference type="GO" id="GO:0043565">
    <property type="term" value="F:sequence-specific DNA binding"/>
    <property type="evidence" value="ECO:0007669"/>
    <property type="project" value="InterPro"/>
</dbReference>
<dbReference type="GO" id="GO:0000160">
    <property type="term" value="P:phosphorelay signal transduction system"/>
    <property type="evidence" value="ECO:0007669"/>
    <property type="project" value="UniProtKB-KW"/>
</dbReference>
<dbReference type="CDD" id="cd17536">
    <property type="entry name" value="REC_YesN-like"/>
    <property type="match status" value="1"/>
</dbReference>
<dbReference type="Gene3D" id="3.40.50.2300">
    <property type="match status" value="1"/>
</dbReference>
<dbReference type="Gene3D" id="1.10.10.60">
    <property type="entry name" value="Homeodomain-like"/>
    <property type="match status" value="2"/>
</dbReference>
<dbReference type="InterPro" id="IPR011006">
    <property type="entry name" value="CheY-like_superfamily"/>
</dbReference>
<dbReference type="InterPro" id="IPR009057">
    <property type="entry name" value="Homeodomain-like_sf"/>
</dbReference>
<dbReference type="InterPro" id="IPR051552">
    <property type="entry name" value="HptR"/>
</dbReference>
<dbReference type="InterPro" id="IPR018060">
    <property type="entry name" value="HTH_AraC"/>
</dbReference>
<dbReference type="InterPro" id="IPR001789">
    <property type="entry name" value="Sig_transdc_resp-reg_receiver"/>
</dbReference>
<dbReference type="PANTHER" id="PTHR42713">
    <property type="entry name" value="HISTIDINE KINASE-RELATED"/>
    <property type="match status" value="1"/>
</dbReference>
<dbReference type="PANTHER" id="PTHR42713:SF3">
    <property type="entry name" value="TRANSCRIPTIONAL REGULATORY PROTEIN HPTR"/>
    <property type="match status" value="1"/>
</dbReference>
<dbReference type="Pfam" id="PF12833">
    <property type="entry name" value="HTH_18"/>
    <property type="match status" value="1"/>
</dbReference>
<dbReference type="Pfam" id="PF00072">
    <property type="entry name" value="Response_reg"/>
    <property type="match status" value="1"/>
</dbReference>
<dbReference type="SMART" id="SM00342">
    <property type="entry name" value="HTH_ARAC"/>
    <property type="match status" value="1"/>
</dbReference>
<dbReference type="SMART" id="SM00448">
    <property type="entry name" value="REC"/>
    <property type="match status" value="1"/>
</dbReference>
<dbReference type="SUPFAM" id="SSF52172">
    <property type="entry name" value="CheY-like"/>
    <property type="match status" value="1"/>
</dbReference>
<dbReference type="SUPFAM" id="SSF46689">
    <property type="entry name" value="Homeodomain-like"/>
    <property type="match status" value="2"/>
</dbReference>
<dbReference type="PROSITE" id="PS01124">
    <property type="entry name" value="HTH_ARAC_FAMILY_2"/>
    <property type="match status" value="1"/>
</dbReference>
<dbReference type="PROSITE" id="PS50110">
    <property type="entry name" value="RESPONSE_REGULATORY"/>
    <property type="match status" value="1"/>
</dbReference>